<name>ILB4_CAEEL</name>
<protein>
    <recommendedName>
        <fullName evidence="3">Insulin-like peptide 7</fullName>
    </recommendedName>
    <alternativeName>
        <fullName evidence="3">Insulin-like peptide beta-type 4</fullName>
    </alternativeName>
</protein>
<gene>
    <name evidence="5" type="primary">ins-7</name>
    <name evidence="5" type="ORF">ZK1251.2</name>
</gene>
<accession>Q23430</accession>
<sequence>MPPIILVFFLVLIPASQQYPFSLESLNDQIINEEVIEYMLENSIRSSRTRRVPDEKKIYRCGRRIHSYVFAVCGKACESNTEVNIASKCCREECTDDFIRKQCCP</sequence>
<proteinExistence type="inferred from homology"/>
<reference key="1">
    <citation type="journal article" date="1998" name="Science">
        <title>Genome sequence of the nematode C. elegans: a platform for investigating biology.</title>
        <authorList>
            <consortium name="The C. elegans sequencing consortium"/>
        </authorList>
    </citation>
    <scope>NUCLEOTIDE SEQUENCE [LARGE SCALE GENOMIC DNA]</scope>
    <source>
        <strain>Bristol N2</strain>
    </source>
</reference>
<reference key="2">
    <citation type="journal article" date="1998" name="Genome Res.">
        <title>New insulin-like proteins with atypical disulfide bond pattern characterized in Caenorhabditis elegans by comparative sequence analysis and homology modeling.</title>
        <authorList>
            <person name="Duret L."/>
            <person name="Guex N."/>
            <person name="Peitsch M.C."/>
            <person name="Bairoch A."/>
        </authorList>
    </citation>
    <scope>SIMILARITY TO INSULIN</scope>
</reference>
<reference key="3">
    <citation type="journal article" date="2020" name="Elife">
        <title>mRNA decapping is an evolutionarily conserved modulator of neuroendocrine signaling that controls development and ageing.</title>
        <authorList>
            <person name="Borbolis F."/>
            <person name="Rallis J."/>
            <person name="Kanatouris G."/>
            <person name="Kokla N."/>
            <person name="Karamalegkos A."/>
            <person name="Vasileiou C."/>
            <person name="Vakaloglou K.M."/>
            <person name="Diallinas G."/>
            <person name="Stravopodis D.J."/>
            <person name="Zervas C.G."/>
            <person name="Syntichaki P."/>
        </authorList>
    </citation>
    <scope>FUNCTION</scope>
    <scope>DISRUPTION PHENOTYPE</scope>
</reference>
<feature type="signal peptide" evidence="1">
    <location>
        <begin position="1"/>
        <end position="18"/>
    </location>
</feature>
<feature type="propeptide" id="PRO_0000016222" evidence="1">
    <location>
        <begin position="19"/>
        <end position="57"/>
    </location>
</feature>
<feature type="chain" id="PRO_0000016223" description="Insulin-like peptide 7">
    <location>
        <begin position="58"/>
        <end position="105"/>
    </location>
</feature>
<feature type="disulfide bond" evidence="1">
    <location>
        <begin position="61"/>
        <end position="90"/>
    </location>
</feature>
<feature type="disulfide bond" evidence="1">
    <location>
        <begin position="73"/>
        <end position="103"/>
    </location>
</feature>
<feature type="disulfide bond" evidence="1">
    <location>
        <begin position="77"/>
        <end position="104"/>
    </location>
</feature>
<feature type="disulfide bond" evidence="1">
    <location>
        <begin position="89"/>
        <end position="94"/>
    </location>
</feature>
<organism>
    <name type="scientific">Caenorhabditis elegans</name>
    <dbReference type="NCBI Taxonomy" id="6239"/>
    <lineage>
        <taxon>Eukaryota</taxon>
        <taxon>Metazoa</taxon>
        <taxon>Ecdysozoa</taxon>
        <taxon>Nematoda</taxon>
        <taxon>Chromadorea</taxon>
        <taxon>Rhabditida</taxon>
        <taxon>Rhabditina</taxon>
        <taxon>Rhabditomorpha</taxon>
        <taxon>Rhabditoidea</taxon>
        <taxon>Rhabditidae</taxon>
        <taxon>Peloderinae</taxon>
        <taxon>Caenorhabditis</taxon>
    </lineage>
</organism>
<keyword id="KW-0165">Cleavage on pair of basic residues</keyword>
<keyword id="KW-1015">Disulfide bond</keyword>
<keyword id="KW-1185">Reference proteome</keyword>
<keyword id="KW-0964">Secreted</keyword>
<keyword id="KW-0732">Signal</keyword>
<evidence type="ECO:0000255" key="1"/>
<evidence type="ECO:0000269" key="2">
    <source>
    </source>
</evidence>
<evidence type="ECO:0000305" key="3"/>
<evidence type="ECO:0000305" key="4">
    <source>
    </source>
</evidence>
<evidence type="ECO:0000312" key="5">
    <source>
        <dbReference type="WormBase" id="ZK1251.2a"/>
    </source>
</evidence>
<dbReference type="EMBL" id="BX284604">
    <property type="protein sequence ID" value="CAA92498.1"/>
    <property type="molecule type" value="Genomic_DNA"/>
</dbReference>
<dbReference type="PIR" id="T27719">
    <property type="entry name" value="T27719"/>
</dbReference>
<dbReference type="RefSeq" id="NP_001255418.1">
    <property type="nucleotide sequence ID" value="NM_001268489.3"/>
</dbReference>
<dbReference type="SMR" id="Q23430"/>
<dbReference type="STRING" id="6239.ZK1251.2b.1"/>
<dbReference type="PaxDb" id="6239-ZK1251.2b"/>
<dbReference type="EnsemblMetazoa" id="ZK1251.2a.1">
    <property type="protein sequence ID" value="ZK1251.2a.1"/>
    <property type="gene ID" value="WBGene00002090"/>
</dbReference>
<dbReference type="GeneID" id="191688"/>
<dbReference type="KEGG" id="cel:CELE_ZK1251.2"/>
<dbReference type="UCSC" id="ZK1251.2">
    <property type="organism name" value="c. elegans"/>
</dbReference>
<dbReference type="AGR" id="WB:WBGene00002090"/>
<dbReference type="CTD" id="191688"/>
<dbReference type="WormBase" id="ZK1251.2a">
    <property type="protein sequence ID" value="CE03849"/>
    <property type="gene ID" value="WBGene00002090"/>
    <property type="gene designation" value="ins-7"/>
</dbReference>
<dbReference type="eggNOG" id="ENOG502TK5N">
    <property type="taxonomic scope" value="Eukaryota"/>
</dbReference>
<dbReference type="GeneTree" id="ENSGT00970000196994"/>
<dbReference type="HOGENOM" id="CLU_154797_0_0_1"/>
<dbReference type="InParanoid" id="Q23430"/>
<dbReference type="PhylomeDB" id="Q23430"/>
<dbReference type="PRO" id="PR:Q23430"/>
<dbReference type="Proteomes" id="UP000001940">
    <property type="component" value="Chromosome IV"/>
</dbReference>
<dbReference type="Bgee" id="WBGene00002090">
    <property type="expression patterns" value="Expressed in adult organism and 1 other cell type or tissue"/>
</dbReference>
<dbReference type="ExpressionAtlas" id="Q23430">
    <property type="expression patterns" value="baseline and differential"/>
</dbReference>
<dbReference type="GO" id="GO:0005576">
    <property type="term" value="C:extracellular region"/>
    <property type="evidence" value="ECO:0007669"/>
    <property type="project" value="UniProtKB-SubCell"/>
</dbReference>
<dbReference type="GO" id="GO:0005179">
    <property type="term" value="F:hormone activity"/>
    <property type="evidence" value="ECO:0007669"/>
    <property type="project" value="InterPro"/>
</dbReference>
<dbReference type="GO" id="GO:0008355">
    <property type="term" value="P:olfactory learning"/>
    <property type="evidence" value="ECO:0000316"/>
    <property type="project" value="WormBase"/>
</dbReference>
<dbReference type="FunFam" id="1.10.100.10:FF:000006">
    <property type="entry name" value="Probable insulin-like peptide beta-type 4"/>
    <property type="match status" value="1"/>
</dbReference>
<dbReference type="Gene3D" id="1.10.100.10">
    <property type="entry name" value="Insulin-like"/>
    <property type="match status" value="1"/>
</dbReference>
<dbReference type="InterPro" id="IPR052335">
    <property type="entry name" value="Insulin-like_regulatory"/>
</dbReference>
<dbReference type="InterPro" id="IPR036438">
    <property type="entry name" value="Insulin-like_sf"/>
</dbReference>
<dbReference type="InterPro" id="IPR022353">
    <property type="entry name" value="Insulin_CS"/>
</dbReference>
<dbReference type="InterPro" id="IPR003235">
    <property type="entry name" value="Nem_insulin-like_b-type"/>
</dbReference>
<dbReference type="PANTHER" id="PTHR33893:SF5">
    <property type="entry name" value="INSULIN RELATED-RELATED"/>
    <property type="match status" value="1"/>
</dbReference>
<dbReference type="PANTHER" id="PTHR33893">
    <property type="entry name" value="INSULIN RELATED-RELATED-RELATED"/>
    <property type="match status" value="1"/>
</dbReference>
<dbReference type="Pfam" id="PF03488">
    <property type="entry name" value="Ins_beta"/>
    <property type="match status" value="1"/>
</dbReference>
<dbReference type="SUPFAM" id="SSF56994">
    <property type="entry name" value="Insulin-like"/>
    <property type="match status" value="1"/>
</dbReference>
<dbReference type="PROSITE" id="PS00262">
    <property type="entry name" value="INSULIN"/>
    <property type="match status" value="1"/>
</dbReference>
<comment type="function">
    <text evidence="2">Insulin-like peptide which plays a role in ageing as a consequence of daf-16 activity.</text>
</comment>
<comment type="subcellular location">
    <subcellularLocation>
        <location evidence="4">Secreted</location>
    </subcellularLocation>
</comment>
<comment type="disruption phenotype">
    <text evidence="2">RNAi-mediated knockdown extends lifespan.</text>
</comment>
<comment type="similarity">
    <text evidence="3">Belongs to the insulin family.</text>
</comment>